<gene>
    <name evidence="13" type="primary">unc-16</name>
    <name evidence="13" type="synonym">egl-39</name>
    <name evidence="13" type="ORF">ZK1098.10</name>
</gene>
<organism>
    <name type="scientific">Caenorhabditis elegans</name>
    <dbReference type="NCBI Taxonomy" id="6239"/>
    <lineage>
        <taxon>Eukaryota</taxon>
        <taxon>Metazoa</taxon>
        <taxon>Ecdysozoa</taxon>
        <taxon>Nematoda</taxon>
        <taxon>Chromadorea</taxon>
        <taxon>Rhabditida</taxon>
        <taxon>Rhabditina</taxon>
        <taxon>Rhabditomorpha</taxon>
        <taxon>Rhabditoidea</taxon>
        <taxon>Rhabditidae</taxon>
        <taxon>Peloderinae</taxon>
        <taxon>Caenorhabditis</taxon>
    </lineage>
</organism>
<evidence type="ECO:0000255" key="1"/>
<evidence type="ECO:0000255" key="2">
    <source>
        <dbReference type="PROSITE-ProRule" id="PRU01112"/>
    </source>
</evidence>
<evidence type="ECO:0000255" key="3">
    <source>
        <dbReference type="PROSITE-ProRule" id="PRU01113"/>
    </source>
</evidence>
<evidence type="ECO:0000256" key="4">
    <source>
        <dbReference type="SAM" id="MobiDB-lite"/>
    </source>
</evidence>
<evidence type="ECO:0000269" key="5">
    <source>
    </source>
</evidence>
<evidence type="ECO:0000269" key="6">
    <source>
    </source>
</evidence>
<evidence type="ECO:0000269" key="7">
    <source>
    </source>
</evidence>
<evidence type="ECO:0000305" key="8"/>
<evidence type="ECO:0000312" key="9">
    <source>
        <dbReference type="WormBase" id="ZK1098.10a"/>
    </source>
</evidence>
<evidence type="ECO:0000312" key="10">
    <source>
        <dbReference type="WormBase" id="ZK1098.10b"/>
    </source>
</evidence>
<evidence type="ECO:0000312" key="11">
    <source>
        <dbReference type="WormBase" id="ZK1098.10c"/>
    </source>
</evidence>
<evidence type="ECO:0000312" key="12">
    <source>
        <dbReference type="WormBase" id="ZK1098.10d"/>
    </source>
</evidence>
<evidence type="ECO:0000312" key="13">
    <source>
        <dbReference type="WormBase" id="ZK1098.10e"/>
    </source>
</evidence>
<evidence type="ECO:0000312" key="14">
    <source>
        <dbReference type="WormBase" id="ZK1098.10f"/>
    </source>
</evidence>
<evidence type="ECO:0000312" key="15">
    <source>
        <dbReference type="WormBase" id="ZK1098.10g"/>
    </source>
</evidence>
<evidence type="ECO:0000312" key="16">
    <source>
        <dbReference type="WormBase" id="ZK1098.10h"/>
    </source>
</evidence>
<evidence type="ECO:0000312" key="17">
    <source>
        <dbReference type="WormBase" id="ZK1098.10i"/>
    </source>
</evidence>
<evidence type="ECO:0000312" key="18">
    <source>
        <dbReference type="WormBase" id="ZK1098.10j"/>
    </source>
</evidence>
<evidence type="ECO:0000312" key="19">
    <source>
        <dbReference type="WormBase" id="ZK1098.10k"/>
    </source>
</evidence>
<evidence type="ECO:0000312" key="20">
    <source>
        <dbReference type="WormBase" id="ZK1098.10l"/>
    </source>
</evidence>
<evidence type="ECO:0000312" key="21">
    <source>
        <dbReference type="WormBase" id="ZK1098.10m"/>
    </source>
</evidence>
<evidence type="ECO:0000312" key="22">
    <source>
        <dbReference type="WormBase" id="ZK1098.10n"/>
    </source>
</evidence>
<evidence type="ECO:0000312" key="23">
    <source>
        <dbReference type="WormBase" id="ZK1098.10o"/>
    </source>
</evidence>
<evidence type="ECO:0000312" key="24">
    <source>
        <dbReference type="WormBase" id="ZK1098.10p"/>
    </source>
</evidence>
<sequence length="1190" mass="134219">MACNLSPVNEMADSITSSTPSEIVYGGPGSPDEHRTMSDKVQTMASAIYRELETMIKVHGEDGVKTLMPLVVNVLEALDLAYLERDEQTAELEMLKEDNEQLQTQYEREKALRKQTEQKYIEIEDTLIGQNKELDKKIESLESIMRMLELKAKNATDHASRLEEREVEQKLEFDRLHERYNTLLRTHVDHMERTKYLMGSEKFELMQNMPLPNMQLRNKMGMAASVDASSIRGVSDLISAHMTQSTTMDVNLANHITNEDWQDEFSSDIEPSPRDIPQSSADALTSPITTKEPTPKREAASPKQSEEEEADETTSVDPKENNDLLGADLTDDESDWNGLGLIPRRHRPNEMLDDDDTSDDGSLGMGREVENLIKENSELLDMKNALNIVKNDLINQVDELNSENMILRDENLSRQMVSEKMQEQITKHEEEIKTLKQKLMEKENEQEEDDVPMAMRKRFTRSEMQRVLMDRNAYKEKLMELEESIKWTEMQRAKKMQQQQQNVNQKKSGGIWEFFSSLLGDSVTPPASSRGNRASSSRGKMTRSVEYIDPDMISERRAAERREQYKLVREHVKKEDGRIEAYGWSLPNVEAEVSSVPIPVCCRPLLDNEPSLKIWCATGVVLRGGRDERGQWIVGDPIYFAPASMKKTKTSNHRPELEDEIKRARNLDARESELDEWQSSSLVWVVSSNQGKSLIAVLDANNPNNIIETFPACDSHLLCIQAVSGVMEGEPEMNEEQSKKYLSGGGKIKDLPEGLDGTDLGACEWVELRKMEDSEDGVPTYCSNDMKPSPKRTRDFSISEVAPVDSSAPVKEDPLPPPANRPGGRAALPPHIRDAMSKYDGVSGQMSGALPTVWMGGQNQYIYIHSAVTAWKQCLRRIKMPDAVLSIVHYKSRIFAALANGTIAIFHRNKHGEWSDEGYHSLRVGSATSSVRSLCLVSTNIWATYKNCVVVLDAESLQIVKVFAAHPRKDSQVRNMQWVGAGVWLSIRLDSTLRLYHAHTYEHLQDVDIEPYVTKMLGTSKLDFSYMRTTALLVSNRRLWIGTGTGVIISVPFSGQLEKKIETKDSKRPAGPGGLVRVYGATSENATNDEKTNDDFIPYCNLAHAQLSFHGHKDSVKFFLGVPGASKNGEDESAEVTLRRMLIMSGGDGYIDFRIGEENEPELTGQSIRPRDMSHLIIWEVDAELPILSK</sequence>
<comment type="function">
    <text evidence="5 6 7">The JNK-interacting protein (JIP) group of scaffold proteins selectively mediates JNK signaling by aggregating specific components of the MAPK cascade to form a functional JNK signaling module. May function as a regulator of synaptic vesicle transport, through interactions with the JNK-signaling components and motor proteins. Binds specific components of the JNK signaling pathway namely jnk-1, jkk-1 and sek-1. Associates with components of the motor protein, kinesin-1. Pre-assembled unc-16 scaffolding complexes are then transported as a cargo of kinesin, to the required subcellular location. Regulates the retrograde transport of autophagosomes from the neurites to the cell body of AIY interneurons (PubMed:30880001).</text>
</comment>
<comment type="interaction">
    <interactant intactId="EBI-315684">
        <id>P34609</id>
    </interactant>
    <interactant intactId="EBI-315578">
        <id>P46822</id>
        <label>klc-2</label>
    </interactant>
    <organismsDiffer>false</organismsDiffer>
    <experiments>4</experiments>
</comment>
<comment type="subcellular location">
    <subcellularLocation>
        <location evidence="5 6">Cytoplasm</location>
        <location evidence="5 6">Perinuclear region</location>
    </subcellularLocation>
    <text>Diffusely localized throughout cell body but intensely localized in regions adjacent to nucleus and at presumptive tips of neural processes.</text>
</comment>
<comment type="alternative products">
    <event type="alternative splicing"/>
    <isoform>
        <id>P34609-1</id>
        <name evidence="13">e</name>
        <sequence type="displayed"/>
    </isoform>
    <isoform>
        <id>P34609-3</id>
        <name evidence="9">a</name>
        <sequence type="described" ref="VSP_060417 VSP_060421"/>
    </isoform>
    <isoform>
        <id>P34609-5</id>
        <name evidence="10">b</name>
        <sequence type="described" ref="VSP_060422"/>
    </isoform>
    <isoform>
        <id>P34609-6</id>
        <name evidence="11">c</name>
        <sequence type="described" ref="VSP_060414"/>
    </isoform>
    <isoform>
        <id>P34609-7</id>
        <name evidence="12">d</name>
        <sequence type="described" ref="VSP_060422 VSP_060428"/>
    </isoform>
    <isoform>
        <id>P34609-8</id>
        <name evidence="14">f</name>
        <sequence type="described" ref="VSP_060416 VSP_060422"/>
    </isoform>
    <isoform>
        <id>P34609-9</id>
        <name evidence="15">g</name>
        <sequence type="described" ref="VSP_060415"/>
    </isoform>
    <isoform>
        <id>P34609-10</id>
        <name evidence="16">h</name>
        <sequence type="described" ref="VSP_060419 VSP_060426 VSP_060427"/>
    </isoform>
    <isoform>
        <id>P34609-11</id>
        <name evidence="17">i</name>
        <sequence type="described" ref="VSP_060425"/>
    </isoform>
    <isoform>
        <id>P34609-12</id>
        <name evidence="18">j</name>
        <sequence type="described" ref="VSP_060417 VSP_060420 VSP_060424 VSP_060426 VSP_060427"/>
    </isoform>
    <isoform>
        <id>P34609-13</id>
        <name evidence="19">k</name>
        <sequence type="described" ref="VSP_060416 VSP_060420 VSP_060424 VSP_060426 VSP_060427"/>
    </isoform>
    <isoform>
        <id>P34609-14</id>
        <name evidence="20">l</name>
        <sequence type="described" ref="VSP_060423 VSP_060426 VSP_060427"/>
    </isoform>
    <isoform>
        <id>P34609-15</id>
        <name evidence="21">m</name>
        <sequence type="described" ref="VSP_060418 VSP_060420 VSP_060424 VSP_060426 VSP_060427"/>
    </isoform>
    <isoform>
        <id>P34609-16</id>
        <name evidence="22">n</name>
        <sequence type="described" ref="VSP_060421 VSP_060426 VSP_060427"/>
    </isoform>
    <isoform>
        <id>P34609-17</id>
        <name evidence="23">o</name>
        <sequence type="described" ref="VSP_060415 VSP_060424"/>
    </isoform>
    <isoform>
        <id>P34609-18</id>
        <name evidence="24">p</name>
        <sequence type="described" ref="VSP_060414 VSP_060428"/>
    </isoform>
</comment>
<comment type="tissue specificity">
    <text evidence="5 6">Expressed in neurons of the ventral cord, retrovesicular and preanal ganglia and nerve ring, intestinal cells, seam and hypodermal cells, body wall, head muscle and pharynx.</text>
</comment>
<comment type="similarity">
    <text evidence="8">Belongs to the JIP scaffold family.</text>
</comment>
<reference key="1">
    <citation type="journal article" date="1999" name="EMBO J.">
        <title>A Caenorhabditis elegans JNK signal transduction pathway regulates coordinated movement via type-D GABAergic motor neurons.</title>
        <authorList>
            <person name="Kawasaki M."/>
            <person name="Hisamoto N."/>
            <person name="Iino Y."/>
            <person name="Yamamoto M."/>
            <person name="Ninomiya-Tsuji J."/>
            <person name="Matsumoto K."/>
        </authorList>
    </citation>
    <scope>NUCLEOTIDE SEQUENCE [MRNA] (ISOFORM A)</scope>
    <scope>FUNCTION</scope>
    <scope>INTERACTION WITH JNK-1; JKK-1 AND SEK-1</scope>
    <scope>SUBCELLULAR LOCATION</scope>
    <scope>TISSUE SPECIFICITY</scope>
</reference>
<reference key="2">
    <citation type="journal article" date="1994" name="Nature">
        <title>2.2 Mb of contiguous nucleotide sequence from chromosome III of C. elegans.</title>
        <authorList>
            <person name="Wilson R."/>
            <person name="Ainscough R."/>
            <person name="Anderson K."/>
            <person name="Baynes C."/>
            <person name="Berks M."/>
            <person name="Bonfield J."/>
            <person name="Burton J."/>
            <person name="Connell M."/>
            <person name="Copsey T."/>
            <person name="Cooper J."/>
            <person name="Coulson A."/>
            <person name="Craxton M."/>
            <person name="Dear S."/>
            <person name="Du Z."/>
            <person name="Durbin R."/>
            <person name="Favello A."/>
            <person name="Fraser A."/>
            <person name="Fulton L."/>
            <person name="Gardner A."/>
            <person name="Green P."/>
            <person name="Hawkins T."/>
            <person name="Hillier L."/>
            <person name="Jier M."/>
            <person name="Johnston L."/>
            <person name="Jones M."/>
            <person name="Kershaw J."/>
            <person name="Kirsten J."/>
            <person name="Laisster N."/>
            <person name="Latreille P."/>
            <person name="Lightning J."/>
            <person name="Lloyd C."/>
            <person name="Mortimore B."/>
            <person name="O'Callaghan M."/>
            <person name="Parsons J."/>
            <person name="Percy C."/>
            <person name="Rifken L."/>
            <person name="Roopra A."/>
            <person name="Saunders D."/>
            <person name="Shownkeen R."/>
            <person name="Sims M."/>
            <person name="Smaldon N."/>
            <person name="Smith A."/>
            <person name="Smith M."/>
            <person name="Sonnhammer E."/>
            <person name="Staden R."/>
            <person name="Sulston J."/>
            <person name="Thierry-Mieg J."/>
            <person name="Thomas K."/>
            <person name="Vaudin M."/>
            <person name="Vaughan K."/>
            <person name="Waterston R."/>
            <person name="Watson A."/>
            <person name="Weinstock L."/>
            <person name="Wilkinson-Sproat J."/>
            <person name="Wohldman P."/>
        </authorList>
    </citation>
    <scope>NUCLEOTIDE SEQUENCE [LARGE SCALE GENOMIC DNA]</scope>
    <source>
        <strain>Bristol N2</strain>
    </source>
</reference>
<reference key="3">
    <citation type="journal article" date="1998" name="Science">
        <title>Genome sequence of the nematode C. elegans: a platform for investigating biology.</title>
        <authorList>
            <consortium name="The C. elegans sequencing consortium"/>
        </authorList>
    </citation>
    <scope>NUCLEOTIDE SEQUENCE [LARGE SCALE GENOMIC DNA]</scope>
    <source>
        <strain>Bristol N2</strain>
    </source>
</reference>
<reference key="4">
    <citation type="journal article" date="2001" name="Neuron">
        <title>UNC-16, a JNK-signaling scaffold protein, regulates vesicle transport in C. elegans.</title>
        <authorList>
            <person name="Byrd D.T."/>
            <person name="Kawasaki M."/>
            <person name="Walcoff M."/>
            <person name="Hisamoto N."/>
            <person name="Matsumoto K."/>
            <person name="Jin Y."/>
        </authorList>
    </citation>
    <scope>FUNCTION</scope>
    <scope>SUBCELLULAR LOCATION</scope>
    <scope>TISSUE SPECIFICITY</scope>
    <scope>INTERACTION WITH JNK-1; JKK-1 AND SEK-1</scope>
</reference>
<reference key="5">
    <citation type="journal article" date="2019" name="Dev. Cell">
        <title>Maturation and Clearance of Autophagosomes in Neurons Depends on a Specific Cysteine Protease Isoform, ATG-4.2.</title>
        <authorList>
            <person name="Hill S.E."/>
            <person name="Kauffman K.J."/>
            <person name="Krout M."/>
            <person name="Richmond J.E."/>
            <person name="Melia T.J."/>
            <person name="Colon-Ramos D.A."/>
        </authorList>
    </citation>
    <scope>FUNCTION</scope>
    <scope>MUTAGENESIS OF LEU-75 AND 765-TRP--LYS-1157</scope>
</reference>
<keyword id="KW-0025">Alternative splicing</keyword>
<keyword id="KW-0175">Coiled coil</keyword>
<keyword id="KW-0963">Cytoplasm</keyword>
<keyword id="KW-1185">Reference proteome</keyword>
<protein>
    <recommendedName>
        <fullName>JNK-interacting protein</fullName>
        <shortName>JIP</shortName>
    </recommendedName>
    <alternativeName>
        <fullName>JNK MAP kinase scaffold protein</fullName>
    </alternativeName>
    <alternativeName>
        <fullName>Uncoordinated protein 16</fullName>
    </alternativeName>
</protein>
<accession>P34609</accession>
<accession>A7LPE3</accession>
<accession>A7LPE4</accession>
<accession>C0P271</accession>
<accession>C7FZT6</accession>
<accession>Q95V72</accession>
<accession>S6EZN6</accession>
<accession>S6EZP3</accession>
<accession>S6F548</accession>
<accession>S6F556</accession>
<accession>S6FD02</accession>
<accession>S6FN04</accession>
<accession>S6FN08</accession>
<accession>S6FWP4</accession>
<accession>S6FWP6</accession>
<accession>U4MKU8</accession>
<feature type="chain" id="PRO_0000220637" description="JNK-interacting protein">
    <location>
        <begin position="1"/>
        <end position="1190"/>
    </location>
</feature>
<feature type="domain" description="RH1" evidence="2">
    <location>
        <begin position="24"/>
        <end position="112"/>
    </location>
</feature>
<feature type="domain" description="RH2" evidence="3">
    <location>
        <begin position="456"/>
        <end position="542"/>
    </location>
</feature>
<feature type="region of interest" description="Disordered" evidence="4">
    <location>
        <begin position="1"/>
        <end position="35"/>
    </location>
</feature>
<feature type="region of interest" description="Disordered" evidence="4">
    <location>
        <begin position="263"/>
        <end position="364"/>
    </location>
</feature>
<feature type="region of interest" description="Disordered" evidence="4">
    <location>
        <begin position="775"/>
        <end position="829"/>
    </location>
</feature>
<feature type="coiled-coil region" evidence="1">
    <location>
        <begin position="78"/>
        <end position="165"/>
    </location>
</feature>
<feature type="coiled-coil region" evidence="1">
    <location>
        <begin position="383"/>
        <end position="491"/>
    </location>
</feature>
<feature type="compositionally biased region" description="Polar residues" evidence="4">
    <location>
        <begin position="277"/>
        <end position="292"/>
    </location>
</feature>
<feature type="splice variant" id="VSP_060414" description="In isoform c and isoform p." evidence="8">
    <location>
        <begin position="1"/>
        <end position="644"/>
    </location>
</feature>
<feature type="splice variant" id="VSP_060415" description="In isoform g and isoform o." evidence="8">
    <location>
        <begin position="1"/>
        <end position="350"/>
    </location>
</feature>
<feature type="splice variant" id="VSP_060416" description="In isoform f and isoform k." evidence="8">
    <original>MACNLSPVNEMADSITSSTPSEIVYGGPGSPDEHRTMSDKVQTMASAIYRELETMIKVHGEDGVKTLMPLVVNVLEALDLAYLERDEQTAELEMLKEDNEQLQTQYEREKALRKQTEQKYIEIEDTLIGQNKELDKKIESLESIMRMLELKAKNATDHASRLEEREVEQKLEFDRLHERYNTLLRTHVDHMERTKYLMGSEKFELMQNMPLPNMQLRNKMGMAASVDASSIRGVSDLISAHMTQSTTMDVNLANHITNE</original>
    <variation>MNSNPQLTFI</variation>
    <location>
        <begin position="1"/>
        <end position="259"/>
    </location>
</feature>
<feature type="splice variant" id="VSP_060417" description="In isoform a and isoform j." evidence="8">
    <location>
        <begin position="1"/>
        <end position="36"/>
    </location>
</feature>
<feature type="splice variant" id="VSP_060418" description="In isoform m." evidence="8">
    <original>K</original>
    <variation>NWFPISHRLHKSGDQSNLSL</variation>
    <location>
        <position position="219"/>
    </location>
</feature>
<feature type="splice variant" id="VSP_060419" description="In isoform h." evidence="8">
    <original>TDDESDWNGLGLIPRRHRPNEMLDDDDTSDDGSL</original>
    <variation>TVNDTFI</variation>
    <location>
        <begin position="330"/>
        <end position="363"/>
    </location>
</feature>
<feature type="splice variant" id="VSP_060420" description="In isoform j, isoform k and isoform m." evidence="8">
    <original>T</original>
    <variation>TGNLVDPAEFASA</variation>
    <location>
        <position position="330"/>
    </location>
</feature>
<feature type="splice variant" id="VSP_060421" description="In isoform a and isoform n." evidence="8">
    <original>DDESDWNGLGLIPRRHRPNEMLDDDDTSDDGSL</original>
    <variation>GNLVDPAEFASAVNDTFI</variation>
    <location>
        <begin position="331"/>
        <end position="363"/>
    </location>
</feature>
<feature type="splice variant" id="VSP_060422" description="In isoform b, isoform d and isoform f." evidence="8">
    <location>
        <begin position="331"/>
        <end position="363"/>
    </location>
</feature>
<feature type="splice variant" id="VSP_060423" description="In isoform l." evidence="8">
    <original>DDESDWNGLGLIPRRHRPNEMLDDDDTSDDGSL</original>
    <variation>GNLVDPAEFASA</variation>
    <location>
        <begin position="331"/>
        <end position="363"/>
    </location>
</feature>
<feature type="splice variant" id="VSP_060424" description="In isoform j, isoform k, isoform m and isoform o." evidence="8">
    <original>L</original>
    <variation>LVNDTFI</variation>
    <location>
        <position position="363"/>
    </location>
</feature>
<feature type="splice variant" id="VSP_060425" description="In isoform i." evidence="8">
    <original>SERRAAERREQYKLVREHVKKEDGRIEAYGWSLPNVEAEVSSVPIPVCCRPLLDNEPSLKIWCATGVVLRGGRDERGQWIVGDPIYFAPASMKKTKTSNHRPELEDEIKRARNLDARESELDEWQSSSLVWVVSSNQGKSLIAVLDANNPNNIIETFPACDSHLLCIQAVSGVMEGEPEMNEEQSKKYLSGGGKIKDLPEGLDGTDLGACEWVELRKMEDSEDGVPTYCSNDMKPSPKRTRDFSISEVAPVDSSAPVKEDPLPPPANRPGGRAALPPHIRDAMSKYDGVSGQMSGALPTVWMGGQNQYIYIHSAVTAWKQCLRRIKMPDAVLSIVHYKSRIFAALANGTIAIFHRNKHGEWSDEGYHSLRVGSATSSVRSLCLVSTNIWATYKNCVVVLDAESLQIVKVFAAHPRKDSQVRNMQWVGAGVWLSIRLDSTLRLYHAHTYEHLQDVDIEPYVTKMLGTSKLDFSYMRTTALLVSNRRLWIGTGTGVIISVPFSGQLEKKIETKDSKRPAGPGGLVRVYGATSENATNDEKTNDDFIPYCNLAHAQLSFHGHKDSVKFFLGVPGASKNGEDESAEVTLRRMLIMSGGDGYIDFRIGEENEPELTGQSIRPRDMSHLIIWEVDAELPILSK</original>
    <variation>HLSR</variation>
    <location>
        <begin position="554"/>
        <end position="1190"/>
    </location>
</feature>
<feature type="splice variant" id="VSP_060426" description="In isoform h, isoform j, isoform k, isoform l, isoform m and isoform n." evidence="8">
    <original>SERR</original>
    <variation>HLSR</variation>
    <location>
        <begin position="554"/>
        <end position="557"/>
    </location>
</feature>
<feature type="splice variant" id="VSP_060427" description="In isoform h, isoform j, isoform k, isoform l, isoform m and isoform n." evidence="8">
    <location>
        <begin position="558"/>
        <end position="1190"/>
    </location>
</feature>
<feature type="splice variant" id="VSP_060428" description="In isoform d and isoform p." evidence="8">
    <original>V</original>
    <variation>VKAKTKLSRVSENVVPDETPKLIPLEKLK</variation>
    <location>
        <position position="810"/>
    </location>
</feature>
<feature type="mutagenesis site" description="In ju146; increases the number of lgg-1-containing protein aggregates in the neurites of AIY interneurons. This is further increased in either an atg-4.2 ola316 or atg-4.2 gk628327 mutant background. Reduces the retrograde trafficking of autophagosomes in AIY neurites, but increases anterograde autophagosome trafficking and increases the number of autophagosomes which are not trafficked. This results in an abnormal accumulation of autophagic vacuoles in neurites." evidence="7">
    <original>L</original>
    <variation>P</variation>
    <location>
        <position position="75"/>
    </location>
</feature>
<feature type="mutagenesis site" description="In n730; increases the number of lgg-1-containing protein aggregates in the neurites of AIY interneurons." evidence="7">
    <location>
        <begin position="765"/>
        <end position="1157"/>
    </location>
</feature>
<name>JIP_CAEEL</name>
<dbReference type="EMBL" id="AF424978">
    <property type="protein sequence ID" value="AAL23934.1"/>
    <property type="molecule type" value="mRNA"/>
</dbReference>
<dbReference type="EMBL" id="BX284603">
    <property type="protein sequence ID" value="CAA80140.1"/>
    <property type="molecule type" value="Genomic_DNA"/>
</dbReference>
<dbReference type="EMBL" id="BX284603">
    <property type="protein sequence ID" value="CAD45611.1"/>
    <property type="molecule type" value="Genomic_DNA"/>
</dbReference>
<dbReference type="EMBL" id="BX284603">
    <property type="protein sequence ID" value="CAO82057.1"/>
    <property type="molecule type" value="Genomic_DNA"/>
</dbReference>
<dbReference type="EMBL" id="BX284603">
    <property type="protein sequence ID" value="CAO82058.1"/>
    <property type="molecule type" value="Genomic_DNA"/>
</dbReference>
<dbReference type="EMBL" id="BX284603">
    <property type="protein sequence ID" value="CAX51690.1"/>
    <property type="molecule type" value="Genomic_DNA"/>
</dbReference>
<dbReference type="EMBL" id="BX284603">
    <property type="protein sequence ID" value="CBA11621.1"/>
    <property type="molecule type" value="Genomic_DNA"/>
</dbReference>
<dbReference type="EMBL" id="BX284603">
    <property type="protein sequence ID" value="CDG24108.1"/>
    <property type="molecule type" value="Genomic_DNA"/>
</dbReference>
<dbReference type="EMBL" id="BX284603">
    <property type="protein sequence ID" value="CDG24109.1"/>
    <property type="molecule type" value="Genomic_DNA"/>
</dbReference>
<dbReference type="EMBL" id="BX284603">
    <property type="protein sequence ID" value="CDG24110.1"/>
    <property type="molecule type" value="Genomic_DNA"/>
</dbReference>
<dbReference type="EMBL" id="BX284603">
    <property type="protein sequence ID" value="CDG24111.2"/>
    <property type="molecule type" value="Genomic_DNA"/>
</dbReference>
<dbReference type="EMBL" id="BX284603">
    <property type="protein sequence ID" value="CDG24112.1"/>
    <property type="molecule type" value="Genomic_DNA"/>
</dbReference>
<dbReference type="EMBL" id="BX284603">
    <property type="protein sequence ID" value="CDG24113.1"/>
    <property type="molecule type" value="Genomic_DNA"/>
</dbReference>
<dbReference type="EMBL" id="BX284603">
    <property type="protein sequence ID" value="CDG24114.1"/>
    <property type="molecule type" value="Genomic_DNA"/>
</dbReference>
<dbReference type="EMBL" id="BX284603">
    <property type="protein sequence ID" value="CDG24115.1"/>
    <property type="molecule type" value="Genomic_DNA"/>
</dbReference>
<dbReference type="EMBL" id="BX284603">
    <property type="protein sequence ID" value="CDG24116.1"/>
    <property type="molecule type" value="Genomic_DNA"/>
</dbReference>
<dbReference type="EMBL" id="BX284603">
    <property type="protein sequence ID" value="CDG24117.1"/>
    <property type="molecule type" value="Genomic_DNA"/>
</dbReference>
<dbReference type="PIR" id="S40932">
    <property type="entry name" value="S40932"/>
</dbReference>
<dbReference type="RefSeq" id="NP_001022981.1">
    <molecule id="P34609-5"/>
    <property type="nucleotide sequence ID" value="NM_001027810.5"/>
</dbReference>
<dbReference type="RefSeq" id="NP_001122747.1">
    <molecule id="P34609-6"/>
    <property type="nucleotide sequence ID" value="NM_001129275.4"/>
</dbReference>
<dbReference type="RefSeq" id="NP_001122748.1">
    <molecule id="P34609-7"/>
    <property type="nucleotide sequence ID" value="NM_001129276.3"/>
</dbReference>
<dbReference type="RefSeq" id="NP_001255008.1">
    <molecule id="P34609-1"/>
    <property type="nucleotide sequence ID" value="NM_001268079.4"/>
</dbReference>
<dbReference type="RefSeq" id="NP_001255009.1">
    <molecule id="P34609-8"/>
    <property type="nucleotide sequence ID" value="NM_001268080.3"/>
</dbReference>
<dbReference type="RefSeq" id="NP_001293608.1">
    <molecule id="P34609-9"/>
    <property type="nucleotide sequence ID" value="NM_001306679.3"/>
</dbReference>
<dbReference type="RefSeq" id="NP_001293609.1">
    <molecule id="P34609-10"/>
    <property type="nucleotide sequence ID" value="NM_001306680.3"/>
</dbReference>
<dbReference type="RefSeq" id="NP_001293610.1">
    <property type="nucleotide sequence ID" value="NM_001306681.1"/>
</dbReference>
<dbReference type="RefSeq" id="NP_001293611.1">
    <molecule id="P34609-12"/>
    <property type="nucleotide sequence ID" value="NM_001306682.3"/>
</dbReference>
<dbReference type="RefSeq" id="NP_001293612.1">
    <molecule id="P34609-13"/>
    <property type="nucleotide sequence ID" value="NM_001306683.3"/>
</dbReference>
<dbReference type="RefSeq" id="NP_001293613.1">
    <molecule id="P34609-14"/>
    <property type="nucleotide sequence ID" value="NM_001306684.3"/>
</dbReference>
<dbReference type="RefSeq" id="NP_001293614.1">
    <molecule id="P34609-15"/>
    <property type="nucleotide sequence ID" value="NM_001306685.3"/>
</dbReference>
<dbReference type="RefSeq" id="NP_001293615.1">
    <molecule id="P34609-16"/>
    <property type="nucleotide sequence ID" value="NM_001306686.3"/>
</dbReference>
<dbReference type="RefSeq" id="NP_001293616.1">
    <molecule id="P34609-17"/>
    <property type="nucleotide sequence ID" value="NM_001306687.3"/>
</dbReference>
<dbReference type="RefSeq" id="NP_001293617.1">
    <molecule id="P34609-18"/>
    <property type="nucleotide sequence ID" value="NM_001306688.3"/>
</dbReference>
<dbReference type="RefSeq" id="NP_001380131.1">
    <molecule id="P34609-11"/>
    <property type="nucleotide sequence ID" value="NM_001392177.1"/>
</dbReference>
<dbReference type="RefSeq" id="NP_741263.3">
    <molecule id="P34609-3"/>
    <property type="nucleotide sequence ID" value="NM_171221.4"/>
</dbReference>
<dbReference type="SMR" id="P34609"/>
<dbReference type="BioGRID" id="41544">
    <property type="interactions" value="16"/>
</dbReference>
<dbReference type="DIP" id="DIP-25590N"/>
<dbReference type="FunCoup" id="P34609">
    <property type="interactions" value="2705"/>
</dbReference>
<dbReference type="IntAct" id="P34609">
    <property type="interactions" value="6"/>
</dbReference>
<dbReference type="STRING" id="6239.ZK1098.10e.1"/>
<dbReference type="iPTMnet" id="P34609"/>
<dbReference type="PaxDb" id="6239-ZK1098.10e"/>
<dbReference type="PeptideAtlas" id="P34609"/>
<dbReference type="EnsemblMetazoa" id="ZK1098.10a.1">
    <molecule id="P34609-3"/>
    <property type="protein sequence ID" value="ZK1098.10a.1"/>
    <property type="gene ID" value="WBGene00006755"/>
</dbReference>
<dbReference type="EnsemblMetazoa" id="ZK1098.10a.2">
    <molecule id="P34609-3"/>
    <property type="protein sequence ID" value="ZK1098.10a.2"/>
    <property type="gene ID" value="WBGene00006755"/>
</dbReference>
<dbReference type="EnsemblMetazoa" id="ZK1098.10b.1">
    <molecule id="P34609-5"/>
    <property type="protein sequence ID" value="ZK1098.10b.1"/>
    <property type="gene ID" value="WBGene00006755"/>
</dbReference>
<dbReference type="EnsemblMetazoa" id="ZK1098.10c.1">
    <molecule id="P34609-6"/>
    <property type="protein sequence ID" value="ZK1098.10c.1"/>
    <property type="gene ID" value="WBGene00006755"/>
</dbReference>
<dbReference type="EnsemblMetazoa" id="ZK1098.10d.1">
    <molecule id="P34609-7"/>
    <property type="protein sequence ID" value="ZK1098.10d.1"/>
    <property type="gene ID" value="WBGene00006755"/>
</dbReference>
<dbReference type="EnsemblMetazoa" id="ZK1098.10e.1">
    <molecule id="P34609-1"/>
    <property type="protein sequence ID" value="ZK1098.10e.1"/>
    <property type="gene ID" value="WBGene00006755"/>
</dbReference>
<dbReference type="EnsemblMetazoa" id="ZK1098.10f.1">
    <molecule id="P34609-8"/>
    <property type="protein sequence ID" value="ZK1098.10f.1"/>
    <property type="gene ID" value="WBGene00006755"/>
</dbReference>
<dbReference type="EnsemblMetazoa" id="ZK1098.10g.1">
    <molecule id="P34609-9"/>
    <property type="protein sequence ID" value="ZK1098.10g.1"/>
    <property type="gene ID" value="WBGene00006755"/>
</dbReference>
<dbReference type="EnsemblMetazoa" id="ZK1098.10h.1">
    <molecule id="P34609-10"/>
    <property type="protein sequence ID" value="ZK1098.10h.1"/>
    <property type="gene ID" value="WBGene00006755"/>
</dbReference>
<dbReference type="EnsemblMetazoa" id="ZK1098.10i.1">
    <molecule id="P34609-11"/>
    <property type="protein sequence ID" value="ZK1098.10i.1"/>
    <property type="gene ID" value="WBGene00006755"/>
</dbReference>
<dbReference type="EnsemblMetazoa" id="ZK1098.10j.1">
    <molecule id="P34609-12"/>
    <property type="protein sequence ID" value="ZK1098.10j.1"/>
    <property type="gene ID" value="WBGene00006755"/>
</dbReference>
<dbReference type="EnsemblMetazoa" id="ZK1098.10k.1">
    <molecule id="P34609-13"/>
    <property type="protein sequence ID" value="ZK1098.10k.1"/>
    <property type="gene ID" value="WBGene00006755"/>
</dbReference>
<dbReference type="EnsemblMetazoa" id="ZK1098.10l.1">
    <molecule id="P34609-14"/>
    <property type="protein sequence ID" value="ZK1098.10l.1"/>
    <property type="gene ID" value="WBGene00006755"/>
</dbReference>
<dbReference type="EnsemblMetazoa" id="ZK1098.10m.1">
    <molecule id="P34609-15"/>
    <property type="protein sequence ID" value="ZK1098.10m.1"/>
    <property type="gene ID" value="WBGene00006755"/>
</dbReference>
<dbReference type="EnsemblMetazoa" id="ZK1098.10n.1">
    <molecule id="P34609-16"/>
    <property type="protein sequence ID" value="ZK1098.10n.1"/>
    <property type="gene ID" value="WBGene00006755"/>
</dbReference>
<dbReference type="EnsemblMetazoa" id="ZK1098.10o.1">
    <molecule id="P34609-17"/>
    <property type="protein sequence ID" value="ZK1098.10o.1"/>
    <property type="gene ID" value="WBGene00006755"/>
</dbReference>
<dbReference type="EnsemblMetazoa" id="ZK1098.10p.1">
    <molecule id="P34609-18"/>
    <property type="protein sequence ID" value="ZK1098.10p.1"/>
    <property type="gene ID" value="WBGene00006755"/>
</dbReference>
<dbReference type="GeneID" id="176349"/>
<dbReference type="KEGG" id="cel:CELE_ZK1098.10"/>
<dbReference type="UCSC" id="ZK1098.10b.1">
    <property type="organism name" value="c. elegans"/>
</dbReference>
<dbReference type="AGR" id="WB:WBGene00006755"/>
<dbReference type="CTD" id="176349"/>
<dbReference type="WormBase" id="ZK1098.10a">
    <molecule id="P34609-3"/>
    <property type="protein sequence ID" value="CE00363"/>
    <property type="gene ID" value="WBGene00006755"/>
    <property type="gene designation" value="unc-16"/>
</dbReference>
<dbReference type="WormBase" id="ZK1098.10b">
    <molecule id="P34609-5"/>
    <property type="protein sequence ID" value="CE31846"/>
    <property type="gene ID" value="WBGene00006755"/>
    <property type="gene designation" value="unc-16"/>
</dbReference>
<dbReference type="WormBase" id="ZK1098.10c">
    <molecule id="P34609-6"/>
    <property type="protein sequence ID" value="CE41490"/>
    <property type="gene ID" value="WBGene00006755"/>
    <property type="gene designation" value="unc-16"/>
</dbReference>
<dbReference type="WormBase" id="ZK1098.10d">
    <molecule id="P34609-7"/>
    <property type="protein sequence ID" value="CE41491"/>
    <property type="gene ID" value="WBGene00006755"/>
    <property type="gene designation" value="unc-16"/>
</dbReference>
<dbReference type="WormBase" id="ZK1098.10e">
    <molecule id="P34609-1"/>
    <property type="protein sequence ID" value="CE43483"/>
    <property type="gene ID" value="WBGene00006755"/>
    <property type="gene designation" value="unc-16"/>
</dbReference>
<dbReference type="WormBase" id="ZK1098.10f">
    <molecule id="P34609-8"/>
    <property type="protein sequence ID" value="CE44092"/>
    <property type="gene ID" value="WBGene00006755"/>
    <property type="gene designation" value="unc-16"/>
</dbReference>
<dbReference type="WormBase" id="ZK1098.10g">
    <molecule id="P34609-9"/>
    <property type="protein sequence ID" value="CE48500"/>
    <property type="gene ID" value="WBGene00006755"/>
    <property type="gene designation" value="unc-16"/>
</dbReference>
<dbReference type="WormBase" id="ZK1098.10h">
    <molecule id="P34609-10"/>
    <property type="protein sequence ID" value="CE48468"/>
    <property type="gene ID" value="WBGene00006755"/>
    <property type="gene designation" value="unc-16"/>
</dbReference>
<dbReference type="WormBase" id="ZK1098.10i">
    <molecule id="P34609-11"/>
    <property type="protein sequence ID" value="CE48413"/>
    <property type="gene ID" value="WBGene00006755"/>
    <property type="gene designation" value="unc-16"/>
</dbReference>
<dbReference type="WormBase" id="ZK1098.10j">
    <molecule id="P34609-12"/>
    <property type="protein sequence ID" value="CE48699"/>
    <property type="gene ID" value="WBGene00006755"/>
    <property type="gene designation" value="unc-16"/>
</dbReference>
<dbReference type="WormBase" id="ZK1098.10k">
    <molecule id="P34609-13"/>
    <property type="protein sequence ID" value="CE48497"/>
    <property type="gene ID" value="WBGene00006755"/>
    <property type="gene designation" value="unc-16"/>
</dbReference>
<dbReference type="WormBase" id="ZK1098.10l">
    <molecule id="P34609-14"/>
    <property type="protein sequence ID" value="CE48433"/>
    <property type="gene ID" value="WBGene00006755"/>
    <property type="gene designation" value="unc-16"/>
</dbReference>
<dbReference type="WormBase" id="ZK1098.10m">
    <molecule id="P34609-15"/>
    <property type="protein sequence ID" value="CE48429"/>
    <property type="gene ID" value="WBGene00006755"/>
    <property type="gene designation" value="unc-16"/>
</dbReference>
<dbReference type="WormBase" id="ZK1098.10n">
    <molecule id="P34609-16"/>
    <property type="protein sequence ID" value="CE48454"/>
    <property type="gene ID" value="WBGene00006755"/>
    <property type="gene designation" value="unc-16"/>
</dbReference>
<dbReference type="WormBase" id="ZK1098.10o">
    <molecule id="P34609-17"/>
    <property type="protein sequence ID" value="CE48464"/>
    <property type="gene ID" value="WBGene00006755"/>
    <property type="gene designation" value="unc-16"/>
</dbReference>
<dbReference type="WormBase" id="ZK1098.10p">
    <molecule id="P34609-18"/>
    <property type="protein sequence ID" value="CE48473"/>
    <property type="gene ID" value="WBGene00006755"/>
    <property type="gene designation" value="unc-16"/>
</dbReference>
<dbReference type="eggNOG" id="KOG2077">
    <property type="taxonomic scope" value="Eukaryota"/>
</dbReference>
<dbReference type="GeneTree" id="ENSGT00940000153496"/>
<dbReference type="HOGENOM" id="CLU_003841_0_0_1"/>
<dbReference type="InParanoid" id="P34609"/>
<dbReference type="OMA" id="WEVDAEL"/>
<dbReference type="OrthoDB" id="10256043at2759"/>
<dbReference type="SignaLink" id="P34609"/>
<dbReference type="PRO" id="PR:P34609"/>
<dbReference type="Proteomes" id="UP000001940">
    <property type="component" value="Chromosome III"/>
</dbReference>
<dbReference type="Bgee" id="WBGene00006755">
    <property type="expression patterns" value="Expressed in pharyngeal muscle cell (C elegans) and 4 other cell types or tissues"/>
</dbReference>
<dbReference type="GO" id="GO:0030424">
    <property type="term" value="C:axon"/>
    <property type="evidence" value="ECO:0000314"/>
    <property type="project" value="WormBase"/>
</dbReference>
<dbReference type="GO" id="GO:0043194">
    <property type="term" value="C:axon initial segment"/>
    <property type="evidence" value="ECO:0000314"/>
    <property type="project" value="WormBase"/>
</dbReference>
<dbReference type="GO" id="GO:0043679">
    <property type="term" value="C:axon terminus"/>
    <property type="evidence" value="ECO:0000314"/>
    <property type="project" value="WormBase"/>
</dbReference>
<dbReference type="GO" id="GO:0044297">
    <property type="term" value="C:cell body"/>
    <property type="evidence" value="ECO:0000314"/>
    <property type="project" value="WormBase"/>
</dbReference>
<dbReference type="GO" id="GO:0005737">
    <property type="term" value="C:cytoplasm"/>
    <property type="evidence" value="ECO:0000314"/>
    <property type="project" value="UniProtKB"/>
</dbReference>
<dbReference type="GO" id="GO:0048471">
    <property type="term" value="C:perinuclear region of cytoplasm"/>
    <property type="evidence" value="ECO:0007669"/>
    <property type="project" value="UniProtKB-SubCell"/>
</dbReference>
<dbReference type="GO" id="GO:0008432">
    <property type="term" value="F:JUN kinase binding"/>
    <property type="evidence" value="ECO:0000318"/>
    <property type="project" value="GO_Central"/>
</dbReference>
<dbReference type="GO" id="GO:0019900">
    <property type="term" value="F:kinase binding"/>
    <property type="evidence" value="ECO:0000314"/>
    <property type="project" value="WormBase"/>
</dbReference>
<dbReference type="GO" id="GO:0019894">
    <property type="term" value="F:kinesin binding"/>
    <property type="evidence" value="ECO:0000315"/>
    <property type="project" value="UniProtKB"/>
</dbReference>
<dbReference type="GO" id="GO:0005078">
    <property type="term" value="F:MAP-kinase scaffold activity"/>
    <property type="evidence" value="ECO:0000314"/>
    <property type="project" value="UniProtKB"/>
</dbReference>
<dbReference type="GO" id="GO:0030159">
    <property type="term" value="F:signaling receptor complex adaptor activity"/>
    <property type="evidence" value="ECO:0000314"/>
    <property type="project" value="WormBase"/>
</dbReference>
<dbReference type="GO" id="GO:0030421">
    <property type="term" value="P:defecation"/>
    <property type="evidence" value="ECO:0000315"/>
    <property type="project" value="WormBase"/>
</dbReference>
<dbReference type="GO" id="GO:0018991">
    <property type="term" value="P:egg-laying behavior"/>
    <property type="evidence" value="ECO:0000315"/>
    <property type="project" value="WormBase"/>
</dbReference>
<dbReference type="GO" id="GO:0040011">
    <property type="term" value="P:locomotion"/>
    <property type="evidence" value="ECO:0000315"/>
    <property type="project" value="WormBase"/>
</dbReference>
<dbReference type="GO" id="GO:0046328">
    <property type="term" value="P:regulation of JNK cascade"/>
    <property type="evidence" value="ECO:0000314"/>
    <property type="project" value="UniProtKB"/>
</dbReference>
<dbReference type="GO" id="GO:0030431">
    <property type="term" value="P:sleep"/>
    <property type="evidence" value="ECO:0000315"/>
    <property type="project" value="UniProtKB"/>
</dbReference>
<dbReference type="GO" id="GO:0048489">
    <property type="term" value="P:synaptic vesicle transport"/>
    <property type="evidence" value="ECO:0000315"/>
    <property type="project" value="WormBase"/>
</dbReference>
<dbReference type="GO" id="GO:0016192">
    <property type="term" value="P:vesicle-mediated transport"/>
    <property type="evidence" value="ECO:0000315"/>
    <property type="project" value="UniProtKB"/>
</dbReference>
<dbReference type="FunFam" id="1.20.5.1000:FF:000001">
    <property type="entry name" value="C-Jun-amino-terminal kinase-interacting protein 3 isoform X2"/>
    <property type="match status" value="1"/>
</dbReference>
<dbReference type="Gene3D" id="1.20.58.1770">
    <property type="match status" value="1"/>
</dbReference>
<dbReference type="Gene3D" id="1.20.5.1000">
    <property type="entry name" value="arf6 gtpase in complex with a specific effector, jip4"/>
    <property type="match status" value="1"/>
</dbReference>
<dbReference type="Gene3D" id="2.130.10.10">
    <property type="entry name" value="YVTN repeat-like/Quinoprotein amine dehydrogenase"/>
    <property type="match status" value="1"/>
</dbReference>
<dbReference type="InterPro" id="IPR039911">
    <property type="entry name" value="JIP3/JIP4"/>
</dbReference>
<dbReference type="InterPro" id="IPR032486">
    <property type="entry name" value="JIP_LZII"/>
</dbReference>
<dbReference type="InterPro" id="IPR011047">
    <property type="entry name" value="Quinoprotein_ADH-like_sf"/>
</dbReference>
<dbReference type="InterPro" id="IPR034743">
    <property type="entry name" value="RH1"/>
</dbReference>
<dbReference type="InterPro" id="IPR034744">
    <property type="entry name" value="RH2"/>
</dbReference>
<dbReference type="InterPro" id="IPR015943">
    <property type="entry name" value="WD40/YVTN_repeat-like_dom_sf"/>
</dbReference>
<dbReference type="PANTHER" id="PTHR13886:SF4">
    <property type="entry name" value="JNK-INTERACTING PROTEIN 3"/>
    <property type="match status" value="1"/>
</dbReference>
<dbReference type="PANTHER" id="PTHR13886">
    <property type="entry name" value="JNK/SAPK-ASSOCIATED PROTEIN"/>
    <property type="match status" value="1"/>
</dbReference>
<dbReference type="Pfam" id="PF16471">
    <property type="entry name" value="JIP_LZII"/>
    <property type="match status" value="1"/>
</dbReference>
<dbReference type="Pfam" id="PF09744">
    <property type="entry name" value="RH1"/>
    <property type="match status" value="1"/>
</dbReference>
<dbReference type="Pfam" id="PF19056">
    <property type="entry name" value="WD40_2"/>
    <property type="match status" value="1"/>
</dbReference>
<dbReference type="SUPFAM" id="SSF50998">
    <property type="entry name" value="Quinoprotein alcohol dehydrogenase-like"/>
    <property type="match status" value="1"/>
</dbReference>
<dbReference type="PROSITE" id="PS51776">
    <property type="entry name" value="RH1"/>
    <property type="match status" value="1"/>
</dbReference>
<dbReference type="PROSITE" id="PS51777">
    <property type="entry name" value="RH2"/>
    <property type="match status" value="1"/>
</dbReference>
<proteinExistence type="evidence at protein level"/>